<proteinExistence type="inferred from homology"/>
<accession>B2SW86</accession>
<name>MIAB_XANOP</name>
<sequence>MPGTSVSDLSTATAVDAPALLPLPVARPSAPAVVRGKLYIKTHGCQMNEYDSAKMADVLAASEGLELTDNPEEADVVLVNTCSIREKAQEKVFSQLGRWKALKAGGKPVIIGVGGCVASQEGEAIVKRAPYVDLVFGPQTLHRLPELIRARRESGKSQVDISFPEIEKFDRLPEPRAEGPSAFVSIMEGCSKYCSFCVVPYTRGEEVSRPFEDVLVEVAQLAAQGVREINLLGQNVNAYRGAYGADAGDPAQYADLGLLIRTIAQIEGIGRIRFTTSHPLEFSDSLVDAYRDVPQLANCLHLPVQAGSDRILSAMKRGYTALEFKSRIRKLRAVRPDISISSDFIVGFPGETEADFEKTMKLIEDVGFDQSFSFVYSRRPGTPASDLQDDTPETVKQARLARLQAHISAHAASISQSMVGSVQRVLVEGPSRRDPNELTGKSENMRPVNFPGNPRLIGQFVDVLITEAMSNSLRGRIQLDDSAH</sequence>
<organism>
    <name type="scientific">Xanthomonas oryzae pv. oryzae (strain PXO99A)</name>
    <dbReference type="NCBI Taxonomy" id="360094"/>
    <lineage>
        <taxon>Bacteria</taxon>
        <taxon>Pseudomonadati</taxon>
        <taxon>Pseudomonadota</taxon>
        <taxon>Gammaproteobacteria</taxon>
        <taxon>Lysobacterales</taxon>
        <taxon>Lysobacteraceae</taxon>
        <taxon>Xanthomonas</taxon>
    </lineage>
</organism>
<keyword id="KW-0004">4Fe-4S</keyword>
<keyword id="KW-0963">Cytoplasm</keyword>
<keyword id="KW-0408">Iron</keyword>
<keyword id="KW-0411">Iron-sulfur</keyword>
<keyword id="KW-0479">Metal-binding</keyword>
<keyword id="KW-0949">S-adenosyl-L-methionine</keyword>
<keyword id="KW-0808">Transferase</keyword>
<keyword id="KW-0819">tRNA processing</keyword>
<feature type="chain" id="PRO_0000374649" description="tRNA-2-methylthio-N(6)-dimethylallyladenosine synthase">
    <location>
        <begin position="1"/>
        <end position="484"/>
    </location>
</feature>
<feature type="domain" description="MTTase N-terminal" evidence="1">
    <location>
        <begin position="36"/>
        <end position="153"/>
    </location>
</feature>
<feature type="domain" description="Radical SAM core" evidence="2">
    <location>
        <begin position="176"/>
        <end position="415"/>
    </location>
</feature>
<feature type="domain" description="TRAM" evidence="1">
    <location>
        <begin position="416"/>
        <end position="479"/>
    </location>
</feature>
<feature type="region of interest" description="Disordered" evidence="3">
    <location>
        <begin position="428"/>
        <end position="450"/>
    </location>
</feature>
<feature type="binding site" evidence="1">
    <location>
        <position position="45"/>
    </location>
    <ligand>
        <name>[4Fe-4S] cluster</name>
        <dbReference type="ChEBI" id="CHEBI:49883"/>
        <label>1</label>
    </ligand>
</feature>
<feature type="binding site" evidence="1">
    <location>
        <position position="82"/>
    </location>
    <ligand>
        <name>[4Fe-4S] cluster</name>
        <dbReference type="ChEBI" id="CHEBI:49883"/>
        <label>1</label>
    </ligand>
</feature>
<feature type="binding site" evidence="1">
    <location>
        <position position="116"/>
    </location>
    <ligand>
        <name>[4Fe-4S] cluster</name>
        <dbReference type="ChEBI" id="CHEBI:49883"/>
        <label>1</label>
    </ligand>
</feature>
<feature type="binding site" evidence="1">
    <location>
        <position position="190"/>
    </location>
    <ligand>
        <name>[4Fe-4S] cluster</name>
        <dbReference type="ChEBI" id="CHEBI:49883"/>
        <label>2</label>
        <note>4Fe-4S-S-AdoMet</note>
    </ligand>
</feature>
<feature type="binding site" evidence="1">
    <location>
        <position position="194"/>
    </location>
    <ligand>
        <name>[4Fe-4S] cluster</name>
        <dbReference type="ChEBI" id="CHEBI:49883"/>
        <label>2</label>
        <note>4Fe-4S-S-AdoMet</note>
    </ligand>
</feature>
<feature type="binding site" evidence="1">
    <location>
        <position position="197"/>
    </location>
    <ligand>
        <name>[4Fe-4S] cluster</name>
        <dbReference type="ChEBI" id="CHEBI:49883"/>
        <label>2</label>
        <note>4Fe-4S-S-AdoMet</note>
    </ligand>
</feature>
<dbReference type="EC" id="2.8.4.3" evidence="1"/>
<dbReference type="EMBL" id="CP000967">
    <property type="protein sequence ID" value="ACD58519.1"/>
    <property type="status" value="ALT_INIT"/>
    <property type="molecule type" value="Genomic_DNA"/>
</dbReference>
<dbReference type="RefSeq" id="WP_041182646.1">
    <property type="nucleotide sequence ID" value="NC_010717.2"/>
</dbReference>
<dbReference type="SMR" id="B2SW86"/>
<dbReference type="KEGG" id="xop:PXO_00446"/>
<dbReference type="eggNOG" id="COG0621">
    <property type="taxonomic scope" value="Bacteria"/>
</dbReference>
<dbReference type="HOGENOM" id="CLU_018697_2_0_6"/>
<dbReference type="Proteomes" id="UP000001740">
    <property type="component" value="Chromosome"/>
</dbReference>
<dbReference type="GO" id="GO:0005829">
    <property type="term" value="C:cytosol"/>
    <property type="evidence" value="ECO:0007669"/>
    <property type="project" value="TreeGrafter"/>
</dbReference>
<dbReference type="GO" id="GO:0051539">
    <property type="term" value="F:4 iron, 4 sulfur cluster binding"/>
    <property type="evidence" value="ECO:0007669"/>
    <property type="project" value="UniProtKB-UniRule"/>
</dbReference>
<dbReference type="GO" id="GO:0046872">
    <property type="term" value="F:metal ion binding"/>
    <property type="evidence" value="ECO:0007669"/>
    <property type="project" value="UniProtKB-KW"/>
</dbReference>
<dbReference type="GO" id="GO:0035597">
    <property type="term" value="F:N6-isopentenyladenosine methylthiotransferase activity"/>
    <property type="evidence" value="ECO:0007669"/>
    <property type="project" value="TreeGrafter"/>
</dbReference>
<dbReference type="CDD" id="cd01335">
    <property type="entry name" value="Radical_SAM"/>
    <property type="match status" value="1"/>
</dbReference>
<dbReference type="FunFam" id="3.40.50.12160:FF:000001">
    <property type="entry name" value="tRNA-2-methylthio-N(6)-dimethylallyladenosine synthase"/>
    <property type="match status" value="1"/>
</dbReference>
<dbReference type="FunFam" id="3.80.30.20:FF:000001">
    <property type="entry name" value="tRNA-2-methylthio-N(6)-dimethylallyladenosine synthase 2"/>
    <property type="match status" value="1"/>
</dbReference>
<dbReference type="Gene3D" id="3.40.50.12160">
    <property type="entry name" value="Methylthiotransferase, N-terminal domain"/>
    <property type="match status" value="1"/>
</dbReference>
<dbReference type="Gene3D" id="3.80.30.20">
    <property type="entry name" value="tm_1862 like domain"/>
    <property type="match status" value="1"/>
</dbReference>
<dbReference type="HAMAP" id="MF_01864">
    <property type="entry name" value="tRNA_metthiotr_MiaB"/>
    <property type="match status" value="1"/>
</dbReference>
<dbReference type="InterPro" id="IPR006638">
    <property type="entry name" value="Elp3/MiaA/NifB-like_rSAM"/>
</dbReference>
<dbReference type="InterPro" id="IPR005839">
    <property type="entry name" value="Methylthiotransferase"/>
</dbReference>
<dbReference type="InterPro" id="IPR020612">
    <property type="entry name" value="Methylthiotransferase_CS"/>
</dbReference>
<dbReference type="InterPro" id="IPR013848">
    <property type="entry name" value="Methylthiotransferase_N"/>
</dbReference>
<dbReference type="InterPro" id="IPR038135">
    <property type="entry name" value="Methylthiotransferase_N_sf"/>
</dbReference>
<dbReference type="InterPro" id="IPR006463">
    <property type="entry name" value="MiaB_methiolase"/>
</dbReference>
<dbReference type="InterPro" id="IPR007197">
    <property type="entry name" value="rSAM"/>
</dbReference>
<dbReference type="InterPro" id="IPR023404">
    <property type="entry name" value="rSAM_horseshoe"/>
</dbReference>
<dbReference type="InterPro" id="IPR002792">
    <property type="entry name" value="TRAM_dom"/>
</dbReference>
<dbReference type="NCBIfam" id="TIGR01574">
    <property type="entry name" value="miaB-methiolase"/>
    <property type="match status" value="1"/>
</dbReference>
<dbReference type="NCBIfam" id="TIGR00089">
    <property type="entry name" value="MiaB/RimO family radical SAM methylthiotransferase"/>
    <property type="match status" value="1"/>
</dbReference>
<dbReference type="PANTHER" id="PTHR43020">
    <property type="entry name" value="CDK5 REGULATORY SUBUNIT-ASSOCIATED PROTEIN 1"/>
    <property type="match status" value="1"/>
</dbReference>
<dbReference type="PANTHER" id="PTHR43020:SF2">
    <property type="entry name" value="MITOCHONDRIAL TRNA METHYLTHIOTRANSFERASE CDK5RAP1"/>
    <property type="match status" value="1"/>
</dbReference>
<dbReference type="Pfam" id="PF04055">
    <property type="entry name" value="Radical_SAM"/>
    <property type="match status" value="1"/>
</dbReference>
<dbReference type="Pfam" id="PF01938">
    <property type="entry name" value="TRAM"/>
    <property type="match status" value="1"/>
</dbReference>
<dbReference type="Pfam" id="PF00919">
    <property type="entry name" value="UPF0004"/>
    <property type="match status" value="1"/>
</dbReference>
<dbReference type="SFLD" id="SFLDF00273">
    <property type="entry name" value="(dimethylallyl)adenosine_tRNA"/>
    <property type="match status" value="1"/>
</dbReference>
<dbReference type="SFLD" id="SFLDG01082">
    <property type="entry name" value="B12-binding_domain_containing"/>
    <property type="match status" value="1"/>
</dbReference>
<dbReference type="SFLD" id="SFLDG01061">
    <property type="entry name" value="methylthiotransferase"/>
    <property type="match status" value="1"/>
</dbReference>
<dbReference type="SMART" id="SM00729">
    <property type="entry name" value="Elp3"/>
    <property type="match status" value="1"/>
</dbReference>
<dbReference type="SUPFAM" id="SSF102114">
    <property type="entry name" value="Radical SAM enzymes"/>
    <property type="match status" value="1"/>
</dbReference>
<dbReference type="PROSITE" id="PS51449">
    <property type="entry name" value="MTTASE_N"/>
    <property type="match status" value="1"/>
</dbReference>
<dbReference type="PROSITE" id="PS01278">
    <property type="entry name" value="MTTASE_RADICAL"/>
    <property type="match status" value="1"/>
</dbReference>
<dbReference type="PROSITE" id="PS51918">
    <property type="entry name" value="RADICAL_SAM"/>
    <property type="match status" value="1"/>
</dbReference>
<dbReference type="PROSITE" id="PS50926">
    <property type="entry name" value="TRAM"/>
    <property type="match status" value="1"/>
</dbReference>
<evidence type="ECO:0000255" key="1">
    <source>
        <dbReference type="HAMAP-Rule" id="MF_01864"/>
    </source>
</evidence>
<evidence type="ECO:0000255" key="2">
    <source>
        <dbReference type="PROSITE-ProRule" id="PRU01266"/>
    </source>
</evidence>
<evidence type="ECO:0000256" key="3">
    <source>
        <dbReference type="SAM" id="MobiDB-lite"/>
    </source>
</evidence>
<evidence type="ECO:0000305" key="4"/>
<comment type="function">
    <text evidence="1">Catalyzes the methylthiolation of N6-(dimethylallyl)adenosine (i(6)A), leading to the formation of 2-methylthio-N6-(dimethylallyl)adenosine (ms(2)i(6)A) at position 37 in tRNAs that read codons beginning with uridine.</text>
</comment>
<comment type="catalytic activity">
    <reaction evidence="1">
        <text>N(6)-dimethylallyladenosine(37) in tRNA + (sulfur carrier)-SH + AH2 + 2 S-adenosyl-L-methionine = 2-methylsulfanyl-N(6)-dimethylallyladenosine(37) in tRNA + (sulfur carrier)-H + 5'-deoxyadenosine + L-methionine + A + S-adenosyl-L-homocysteine + 2 H(+)</text>
        <dbReference type="Rhea" id="RHEA:37067"/>
        <dbReference type="Rhea" id="RHEA-COMP:10375"/>
        <dbReference type="Rhea" id="RHEA-COMP:10376"/>
        <dbReference type="Rhea" id="RHEA-COMP:14737"/>
        <dbReference type="Rhea" id="RHEA-COMP:14739"/>
        <dbReference type="ChEBI" id="CHEBI:13193"/>
        <dbReference type="ChEBI" id="CHEBI:15378"/>
        <dbReference type="ChEBI" id="CHEBI:17319"/>
        <dbReference type="ChEBI" id="CHEBI:17499"/>
        <dbReference type="ChEBI" id="CHEBI:29917"/>
        <dbReference type="ChEBI" id="CHEBI:57844"/>
        <dbReference type="ChEBI" id="CHEBI:57856"/>
        <dbReference type="ChEBI" id="CHEBI:59789"/>
        <dbReference type="ChEBI" id="CHEBI:64428"/>
        <dbReference type="ChEBI" id="CHEBI:74415"/>
        <dbReference type="ChEBI" id="CHEBI:74417"/>
        <dbReference type="EC" id="2.8.4.3"/>
    </reaction>
</comment>
<comment type="cofactor">
    <cofactor evidence="1">
        <name>[4Fe-4S] cluster</name>
        <dbReference type="ChEBI" id="CHEBI:49883"/>
    </cofactor>
    <text evidence="1">Binds 2 [4Fe-4S] clusters. One cluster is coordinated with 3 cysteines and an exchangeable S-adenosyl-L-methionine.</text>
</comment>
<comment type="subunit">
    <text evidence="1">Monomer.</text>
</comment>
<comment type="subcellular location">
    <subcellularLocation>
        <location evidence="1">Cytoplasm</location>
    </subcellularLocation>
</comment>
<comment type="similarity">
    <text evidence="1">Belongs to the methylthiotransferase family. MiaB subfamily.</text>
</comment>
<comment type="sequence caution" evidence="4">
    <conflict type="erroneous initiation">
        <sequence resource="EMBL-CDS" id="ACD58519"/>
    </conflict>
</comment>
<gene>
    <name evidence="1" type="primary">miaB</name>
    <name type="ordered locus">PXO_00446</name>
</gene>
<protein>
    <recommendedName>
        <fullName evidence="1">tRNA-2-methylthio-N(6)-dimethylallyladenosine synthase</fullName>
        <ecNumber evidence="1">2.8.4.3</ecNumber>
    </recommendedName>
    <alternativeName>
        <fullName evidence="1">(Dimethylallyl)adenosine tRNA methylthiotransferase MiaB</fullName>
    </alternativeName>
    <alternativeName>
        <fullName evidence="1">tRNA-i(6)A37 methylthiotransferase</fullName>
    </alternativeName>
</protein>
<reference key="1">
    <citation type="journal article" date="2008" name="BMC Genomics">
        <title>Genome sequence and rapid evolution of the rice pathogen Xanthomonas oryzae pv. oryzae PXO99A.</title>
        <authorList>
            <person name="Salzberg S.L."/>
            <person name="Sommer D.D."/>
            <person name="Schatz M.C."/>
            <person name="Phillippy A.M."/>
            <person name="Rabinowicz P.D."/>
            <person name="Tsuge S."/>
            <person name="Furutani A."/>
            <person name="Ochiai H."/>
            <person name="Delcher A.L."/>
            <person name="Kelley D."/>
            <person name="Madupu R."/>
            <person name="Puiu D."/>
            <person name="Radune D."/>
            <person name="Shumway M."/>
            <person name="Trapnell C."/>
            <person name="Aparna G."/>
            <person name="Jha G."/>
            <person name="Pandey A."/>
            <person name="Patil P.B."/>
            <person name="Ishihara H."/>
            <person name="Meyer D.F."/>
            <person name="Szurek B."/>
            <person name="Verdier V."/>
            <person name="Koebnik R."/>
            <person name="Dow J.M."/>
            <person name="Ryan R.P."/>
            <person name="Hirata H."/>
            <person name="Tsuyumu S."/>
            <person name="Won Lee S."/>
            <person name="Seo Y.-S."/>
            <person name="Sriariyanum M."/>
            <person name="Ronald P.C."/>
            <person name="Sonti R.V."/>
            <person name="Van Sluys M.-A."/>
            <person name="Leach J.E."/>
            <person name="White F.F."/>
            <person name="Bogdanove A.J."/>
        </authorList>
    </citation>
    <scope>NUCLEOTIDE SEQUENCE [LARGE SCALE GENOMIC DNA]</scope>
    <source>
        <strain>PXO99A</strain>
    </source>
</reference>